<feature type="chain" id="PRO_1000184531" description="ATP synthase subunit c">
    <location>
        <begin position="1"/>
        <end position="85"/>
    </location>
</feature>
<feature type="transmembrane region" description="Helical" evidence="1">
    <location>
        <begin position="10"/>
        <end position="30"/>
    </location>
</feature>
<feature type="transmembrane region" description="Helical" evidence="1">
    <location>
        <begin position="53"/>
        <end position="73"/>
    </location>
</feature>
<feature type="site" description="Reversibly protonated during proton transport" evidence="1">
    <location>
        <position position="60"/>
    </location>
</feature>
<reference key="1">
    <citation type="submission" date="2008-08" db="EMBL/GenBank/DDBJ databases">
        <title>Complete sequence of Vibrio fischeri strain MJ11.</title>
        <authorList>
            <person name="Mandel M.J."/>
            <person name="Stabb E.V."/>
            <person name="Ruby E.G."/>
            <person name="Ferriera S."/>
            <person name="Johnson J."/>
            <person name="Kravitz S."/>
            <person name="Beeson K."/>
            <person name="Sutton G."/>
            <person name="Rogers Y.-H."/>
            <person name="Friedman R."/>
            <person name="Frazier M."/>
            <person name="Venter J.C."/>
        </authorList>
    </citation>
    <scope>NUCLEOTIDE SEQUENCE [LARGE SCALE GENOMIC DNA]</scope>
    <source>
        <strain>MJ11</strain>
    </source>
</reference>
<proteinExistence type="inferred from homology"/>
<comment type="function">
    <text evidence="1">F(1)F(0) ATP synthase produces ATP from ADP in the presence of a proton or sodium gradient. F-type ATPases consist of two structural domains, F(1) containing the extramembraneous catalytic core and F(0) containing the membrane proton channel, linked together by a central stalk and a peripheral stalk. During catalysis, ATP synthesis in the catalytic domain of F(1) is coupled via a rotary mechanism of the central stalk subunits to proton translocation.</text>
</comment>
<comment type="function">
    <text evidence="1">Key component of the F(0) channel; it plays a direct role in translocation across the membrane. A homomeric c-ring of between 10-14 subunits forms the central stalk rotor element with the F(1) delta and epsilon subunits.</text>
</comment>
<comment type="subunit">
    <text evidence="1">F-type ATPases have 2 components, F(1) - the catalytic core - and F(0) - the membrane proton channel. F(1) has five subunits: alpha(3), beta(3), gamma(1), delta(1), epsilon(1). F(0) has three main subunits: a(1), b(2) and c(10-14). The alpha and beta chains form an alternating ring which encloses part of the gamma chain. F(1) is attached to F(0) by a central stalk formed by the gamma and epsilon chains, while a peripheral stalk is formed by the delta and b chains.</text>
</comment>
<comment type="subcellular location">
    <subcellularLocation>
        <location evidence="1">Cell inner membrane</location>
        <topology evidence="1">Multi-pass membrane protein</topology>
    </subcellularLocation>
</comment>
<comment type="similarity">
    <text evidence="1">Belongs to the ATPase C chain family.</text>
</comment>
<dbReference type="EMBL" id="CP001139">
    <property type="protein sequence ID" value="ACH65124.1"/>
    <property type="molecule type" value="Genomic_DNA"/>
</dbReference>
<dbReference type="RefSeq" id="WP_005372317.1">
    <property type="nucleotide sequence ID" value="NC_011184.1"/>
</dbReference>
<dbReference type="SMR" id="B5FCZ6"/>
<dbReference type="GeneID" id="96872170"/>
<dbReference type="KEGG" id="vfm:VFMJ11_2704"/>
<dbReference type="HOGENOM" id="CLU_148047_1_0_6"/>
<dbReference type="Proteomes" id="UP000001857">
    <property type="component" value="Chromosome I"/>
</dbReference>
<dbReference type="GO" id="GO:0005886">
    <property type="term" value="C:plasma membrane"/>
    <property type="evidence" value="ECO:0007669"/>
    <property type="project" value="UniProtKB-SubCell"/>
</dbReference>
<dbReference type="GO" id="GO:0045259">
    <property type="term" value="C:proton-transporting ATP synthase complex"/>
    <property type="evidence" value="ECO:0007669"/>
    <property type="project" value="UniProtKB-KW"/>
</dbReference>
<dbReference type="GO" id="GO:0033177">
    <property type="term" value="C:proton-transporting two-sector ATPase complex, proton-transporting domain"/>
    <property type="evidence" value="ECO:0007669"/>
    <property type="project" value="InterPro"/>
</dbReference>
<dbReference type="GO" id="GO:0008289">
    <property type="term" value="F:lipid binding"/>
    <property type="evidence" value="ECO:0007669"/>
    <property type="project" value="UniProtKB-KW"/>
</dbReference>
<dbReference type="GO" id="GO:0046933">
    <property type="term" value="F:proton-transporting ATP synthase activity, rotational mechanism"/>
    <property type="evidence" value="ECO:0007669"/>
    <property type="project" value="UniProtKB-UniRule"/>
</dbReference>
<dbReference type="CDD" id="cd18185">
    <property type="entry name" value="ATP-synt_Fo_c_ATPE"/>
    <property type="match status" value="1"/>
</dbReference>
<dbReference type="FunFam" id="1.20.20.10:FF:000002">
    <property type="entry name" value="ATP synthase subunit c"/>
    <property type="match status" value="1"/>
</dbReference>
<dbReference type="Gene3D" id="1.20.20.10">
    <property type="entry name" value="F1F0 ATP synthase subunit C"/>
    <property type="match status" value="1"/>
</dbReference>
<dbReference type="HAMAP" id="MF_01396">
    <property type="entry name" value="ATP_synth_c_bact"/>
    <property type="match status" value="1"/>
</dbReference>
<dbReference type="InterPro" id="IPR005953">
    <property type="entry name" value="ATP_synth_csu_bac/chlpt"/>
</dbReference>
<dbReference type="InterPro" id="IPR000454">
    <property type="entry name" value="ATP_synth_F0_csu"/>
</dbReference>
<dbReference type="InterPro" id="IPR020537">
    <property type="entry name" value="ATP_synth_F0_csu_DDCD_BS"/>
</dbReference>
<dbReference type="InterPro" id="IPR038662">
    <property type="entry name" value="ATP_synth_F0_csu_sf"/>
</dbReference>
<dbReference type="InterPro" id="IPR002379">
    <property type="entry name" value="ATPase_proteolipid_c-like_dom"/>
</dbReference>
<dbReference type="InterPro" id="IPR035921">
    <property type="entry name" value="F/V-ATP_Csub_sf"/>
</dbReference>
<dbReference type="NCBIfam" id="TIGR01260">
    <property type="entry name" value="ATP_synt_c"/>
    <property type="match status" value="1"/>
</dbReference>
<dbReference type="NCBIfam" id="NF005363">
    <property type="entry name" value="PRK06876.1"/>
    <property type="match status" value="1"/>
</dbReference>
<dbReference type="Pfam" id="PF00137">
    <property type="entry name" value="ATP-synt_C"/>
    <property type="match status" value="1"/>
</dbReference>
<dbReference type="PRINTS" id="PR00124">
    <property type="entry name" value="ATPASEC"/>
</dbReference>
<dbReference type="SUPFAM" id="SSF81333">
    <property type="entry name" value="F1F0 ATP synthase subunit C"/>
    <property type="match status" value="1"/>
</dbReference>
<dbReference type="PROSITE" id="PS00605">
    <property type="entry name" value="ATPASE_C"/>
    <property type="match status" value="1"/>
</dbReference>
<protein>
    <recommendedName>
        <fullName evidence="1">ATP synthase subunit c</fullName>
    </recommendedName>
    <alternativeName>
        <fullName evidence="1">ATP synthase F(0) sector subunit c</fullName>
    </alternativeName>
    <alternativeName>
        <fullName evidence="1">F-type ATPase subunit c</fullName>
        <shortName evidence="1">F-ATPase subunit c</shortName>
    </alternativeName>
    <alternativeName>
        <fullName evidence="1">Lipid-binding protein</fullName>
    </alternativeName>
</protein>
<organism>
    <name type="scientific">Aliivibrio fischeri (strain MJ11)</name>
    <name type="common">Vibrio fischeri</name>
    <dbReference type="NCBI Taxonomy" id="388396"/>
    <lineage>
        <taxon>Bacteria</taxon>
        <taxon>Pseudomonadati</taxon>
        <taxon>Pseudomonadota</taxon>
        <taxon>Gammaproteobacteria</taxon>
        <taxon>Vibrionales</taxon>
        <taxon>Vibrionaceae</taxon>
        <taxon>Aliivibrio</taxon>
    </lineage>
</organism>
<keyword id="KW-0066">ATP synthesis</keyword>
<keyword id="KW-0997">Cell inner membrane</keyword>
<keyword id="KW-1003">Cell membrane</keyword>
<keyword id="KW-0138">CF(0)</keyword>
<keyword id="KW-0375">Hydrogen ion transport</keyword>
<keyword id="KW-0406">Ion transport</keyword>
<keyword id="KW-0446">Lipid-binding</keyword>
<keyword id="KW-0472">Membrane</keyword>
<keyword id="KW-0812">Transmembrane</keyword>
<keyword id="KW-1133">Transmembrane helix</keyword>
<keyword id="KW-0813">Transport</keyword>
<accession>B5FCZ6</accession>
<name>ATPL_ALIFM</name>
<sequence>METLLSFSAIAVGIIVGLASLGTAIGFALLGGKFLEGAARQPEMAPMLQVKMFIIAGLLDAVPMIGIVIALLFTFANPFVGQLAG</sequence>
<evidence type="ECO:0000255" key="1">
    <source>
        <dbReference type="HAMAP-Rule" id="MF_01396"/>
    </source>
</evidence>
<gene>
    <name evidence="1" type="primary">atpE</name>
    <name type="ordered locus">VFMJ11_2704</name>
</gene>